<protein>
    <recommendedName>
        <fullName>rRNA-processing protein efg1</fullName>
    </recommendedName>
</protein>
<sequence>MPKDFKPPRTPRKTPYPDRPHKSKSKSQPDREEKQHPSVNELKRRIRDVKRLLAKPDLSADKRVIQERALAGYEKELADEERRRERSRMIKKYHFVRFLDRKTATKEVKRLTRKRDELAKNSDIDEATKQKKLEQLNVRLHTANVNLNYTIYYPLTEKYISIYAEKKKKNEGQNEDEDVQMEGGPTQEEEIVTAATTAQKKAMLQTVEKCMQDGTLDLLREGKLNLNADSVTEGGTKTETKSKPKSKPSSKDTGVKTVGGKENAKPRTKTSDSKRGKSAKHTAPAPAESDSESDGGFFEI</sequence>
<comment type="function">
    <text evidence="1">Involved in rRNA processing.</text>
</comment>
<comment type="subcellular location">
    <subcellularLocation>
        <location evidence="1">Nucleus</location>
        <location evidence="1">Nucleolus</location>
    </subcellularLocation>
</comment>
<comment type="similarity">
    <text evidence="4">Belongs to the EFG1 family.</text>
</comment>
<evidence type="ECO:0000250" key="1"/>
<evidence type="ECO:0000255" key="2"/>
<evidence type="ECO:0000256" key="3">
    <source>
        <dbReference type="SAM" id="MobiDB-lite"/>
    </source>
</evidence>
<evidence type="ECO:0000305" key="4"/>
<gene>
    <name type="primary">efg1</name>
    <name type="ORF">AN4534</name>
</gene>
<proteinExistence type="inferred from homology"/>
<dbReference type="EMBL" id="AACD01000078">
    <property type="protein sequence ID" value="EAA60877.1"/>
    <property type="molecule type" value="Genomic_DNA"/>
</dbReference>
<dbReference type="EMBL" id="BN001303">
    <property type="protein sequence ID" value="CBF77306.1"/>
    <property type="molecule type" value="Genomic_DNA"/>
</dbReference>
<dbReference type="RefSeq" id="XP_662138.1">
    <property type="nucleotide sequence ID" value="XM_657046.1"/>
</dbReference>
<dbReference type="SMR" id="Q5B4J6"/>
<dbReference type="STRING" id="227321.Q5B4J6"/>
<dbReference type="EnsemblFungi" id="CBF77306">
    <property type="protein sequence ID" value="CBF77306"/>
    <property type="gene ID" value="ANIA_04534"/>
</dbReference>
<dbReference type="KEGG" id="ani:ANIA_04534"/>
<dbReference type="VEuPathDB" id="FungiDB:AN4534"/>
<dbReference type="eggNOG" id="KOG4484">
    <property type="taxonomic scope" value="Eukaryota"/>
</dbReference>
<dbReference type="HOGENOM" id="CLU_066912_0_0_1"/>
<dbReference type="InParanoid" id="Q5B4J6"/>
<dbReference type="OMA" id="KCMEEGT"/>
<dbReference type="OrthoDB" id="47732at2759"/>
<dbReference type="Proteomes" id="UP000000560">
    <property type="component" value="Chromosome III"/>
</dbReference>
<dbReference type="GO" id="GO:0005730">
    <property type="term" value="C:nucleolus"/>
    <property type="evidence" value="ECO:0007669"/>
    <property type="project" value="UniProtKB-SubCell"/>
</dbReference>
<dbReference type="GO" id="GO:0000462">
    <property type="term" value="P:maturation of SSU-rRNA from tricistronic rRNA transcript (SSU-rRNA, 5.8S rRNA, LSU-rRNA)"/>
    <property type="evidence" value="ECO:0000318"/>
    <property type="project" value="GO_Central"/>
</dbReference>
<dbReference type="InterPro" id="IPR019310">
    <property type="entry name" value="Efg1"/>
</dbReference>
<dbReference type="InterPro" id="IPR050786">
    <property type="entry name" value="EFG1_rRNA-proc"/>
</dbReference>
<dbReference type="PANTHER" id="PTHR33911">
    <property type="entry name" value="RRNA-PROCESSING PROTEIN EFG1"/>
    <property type="match status" value="1"/>
</dbReference>
<dbReference type="PANTHER" id="PTHR33911:SF1">
    <property type="entry name" value="RRNA-PROCESSING PROTEIN EFG1"/>
    <property type="match status" value="1"/>
</dbReference>
<dbReference type="Pfam" id="PF10153">
    <property type="entry name" value="Efg1"/>
    <property type="match status" value="1"/>
</dbReference>
<reference key="1">
    <citation type="journal article" date="2005" name="Nature">
        <title>Sequencing of Aspergillus nidulans and comparative analysis with A. fumigatus and A. oryzae.</title>
        <authorList>
            <person name="Galagan J.E."/>
            <person name="Calvo S.E."/>
            <person name="Cuomo C."/>
            <person name="Ma L.-J."/>
            <person name="Wortman J.R."/>
            <person name="Batzoglou S."/>
            <person name="Lee S.-I."/>
            <person name="Bastuerkmen M."/>
            <person name="Spevak C.C."/>
            <person name="Clutterbuck J."/>
            <person name="Kapitonov V."/>
            <person name="Jurka J."/>
            <person name="Scazzocchio C."/>
            <person name="Farman M.L."/>
            <person name="Butler J."/>
            <person name="Purcell S."/>
            <person name="Harris S."/>
            <person name="Braus G.H."/>
            <person name="Draht O."/>
            <person name="Busch S."/>
            <person name="D'Enfert C."/>
            <person name="Bouchier C."/>
            <person name="Goldman G.H."/>
            <person name="Bell-Pedersen D."/>
            <person name="Griffiths-Jones S."/>
            <person name="Doonan J.H."/>
            <person name="Yu J."/>
            <person name="Vienken K."/>
            <person name="Pain A."/>
            <person name="Freitag M."/>
            <person name="Selker E.U."/>
            <person name="Archer D.B."/>
            <person name="Penalva M.A."/>
            <person name="Oakley B.R."/>
            <person name="Momany M."/>
            <person name="Tanaka T."/>
            <person name="Kumagai T."/>
            <person name="Asai K."/>
            <person name="Machida M."/>
            <person name="Nierman W.C."/>
            <person name="Denning D.W."/>
            <person name="Caddick M.X."/>
            <person name="Hynes M."/>
            <person name="Paoletti M."/>
            <person name="Fischer R."/>
            <person name="Miller B.L."/>
            <person name="Dyer P.S."/>
            <person name="Sachs M.S."/>
            <person name="Osmani S.A."/>
            <person name="Birren B.W."/>
        </authorList>
    </citation>
    <scope>NUCLEOTIDE SEQUENCE [LARGE SCALE GENOMIC DNA]</scope>
    <source>
        <strain>FGSC A4 / ATCC 38163 / CBS 112.46 / NRRL 194 / M139</strain>
    </source>
</reference>
<reference key="2">
    <citation type="journal article" date="2009" name="Fungal Genet. Biol.">
        <title>The 2008 update of the Aspergillus nidulans genome annotation: a community effort.</title>
        <authorList>
            <person name="Wortman J.R."/>
            <person name="Gilsenan J.M."/>
            <person name="Joardar V."/>
            <person name="Deegan J."/>
            <person name="Clutterbuck J."/>
            <person name="Andersen M.R."/>
            <person name="Archer D."/>
            <person name="Bencina M."/>
            <person name="Braus G."/>
            <person name="Coutinho P."/>
            <person name="von Dohren H."/>
            <person name="Doonan J."/>
            <person name="Driessen A.J."/>
            <person name="Durek P."/>
            <person name="Espeso E."/>
            <person name="Fekete E."/>
            <person name="Flipphi M."/>
            <person name="Estrada C.G."/>
            <person name="Geysens S."/>
            <person name="Goldman G."/>
            <person name="de Groot P.W."/>
            <person name="Hansen K."/>
            <person name="Harris S.D."/>
            <person name="Heinekamp T."/>
            <person name="Helmstaedt K."/>
            <person name="Henrissat B."/>
            <person name="Hofmann G."/>
            <person name="Homan T."/>
            <person name="Horio T."/>
            <person name="Horiuchi H."/>
            <person name="James S."/>
            <person name="Jones M."/>
            <person name="Karaffa L."/>
            <person name="Karanyi Z."/>
            <person name="Kato M."/>
            <person name="Keller N."/>
            <person name="Kelly D.E."/>
            <person name="Kiel J.A."/>
            <person name="Kim J.M."/>
            <person name="van der Klei I.J."/>
            <person name="Klis F.M."/>
            <person name="Kovalchuk A."/>
            <person name="Krasevec N."/>
            <person name="Kubicek C.P."/>
            <person name="Liu B."/>
            <person name="Maccabe A."/>
            <person name="Meyer V."/>
            <person name="Mirabito P."/>
            <person name="Miskei M."/>
            <person name="Mos M."/>
            <person name="Mullins J."/>
            <person name="Nelson D.R."/>
            <person name="Nielsen J."/>
            <person name="Oakley B.R."/>
            <person name="Osmani S.A."/>
            <person name="Pakula T."/>
            <person name="Paszewski A."/>
            <person name="Paulsen I."/>
            <person name="Pilsyk S."/>
            <person name="Pocsi I."/>
            <person name="Punt P.J."/>
            <person name="Ram A.F."/>
            <person name="Ren Q."/>
            <person name="Robellet X."/>
            <person name="Robson G."/>
            <person name="Seiboth B."/>
            <person name="van Solingen P."/>
            <person name="Specht T."/>
            <person name="Sun J."/>
            <person name="Taheri-Talesh N."/>
            <person name="Takeshita N."/>
            <person name="Ussery D."/>
            <person name="vanKuyk P.A."/>
            <person name="Visser H."/>
            <person name="van de Vondervoort P.J."/>
            <person name="de Vries R.P."/>
            <person name="Walton J."/>
            <person name="Xiang X."/>
            <person name="Xiong Y."/>
            <person name="Zeng A.P."/>
            <person name="Brandt B.W."/>
            <person name="Cornell M.J."/>
            <person name="van den Hondel C.A."/>
            <person name="Visser J."/>
            <person name="Oliver S.G."/>
            <person name="Turner G."/>
        </authorList>
    </citation>
    <scope>GENOME REANNOTATION</scope>
    <source>
        <strain>FGSC A4 / ATCC 38163 / CBS 112.46 / NRRL 194 / M139</strain>
    </source>
</reference>
<feature type="chain" id="PRO_0000330272" description="rRNA-processing protein efg1">
    <location>
        <begin position="1"/>
        <end position="300"/>
    </location>
</feature>
<feature type="region of interest" description="Disordered" evidence="3">
    <location>
        <begin position="1"/>
        <end position="44"/>
    </location>
</feature>
<feature type="region of interest" description="Disordered" evidence="3">
    <location>
        <begin position="168"/>
        <end position="187"/>
    </location>
</feature>
<feature type="region of interest" description="Disordered" evidence="3">
    <location>
        <begin position="227"/>
        <end position="300"/>
    </location>
</feature>
<feature type="coiled-coil region" evidence="2">
    <location>
        <begin position="61"/>
        <end position="148"/>
    </location>
</feature>
<feature type="compositionally biased region" description="Basic and acidic residues" evidence="3">
    <location>
        <begin position="27"/>
        <end position="36"/>
    </location>
</feature>
<feature type="compositionally biased region" description="Basic and acidic residues" evidence="3">
    <location>
        <begin position="262"/>
        <end position="275"/>
    </location>
</feature>
<organism>
    <name type="scientific">Emericella nidulans (strain FGSC A4 / ATCC 38163 / CBS 112.46 / NRRL 194 / M139)</name>
    <name type="common">Aspergillus nidulans</name>
    <dbReference type="NCBI Taxonomy" id="227321"/>
    <lineage>
        <taxon>Eukaryota</taxon>
        <taxon>Fungi</taxon>
        <taxon>Dikarya</taxon>
        <taxon>Ascomycota</taxon>
        <taxon>Pezizomycotina</taxon>
        <taxon>Eurotiomycetes</taxon>
        <taxon>Eurotiomycetidae</taxon>
        <taxon>Eurotiales</taxon>
        <taxon>Aspergillaceae</taxon>
        <taxon>Aspergillus</taxon>
        <taxon>Aspergillus subgen. Nidulantes</taxon>
    </lineage>
</organism>
<keyword id="KW-0175">Coiled coil</keyword>
<keyword id="KW-0539">Nucleus</keyword>
<keyword id="KW-1185">Reference proteome</keyword>
<keyword id="KW-0698">rRNA processing</keyword>
<name>EFG1P_EMENI</name>
<accession>Q5B4J6</accession>
<accession>C8V893</accession>